<keyword id="KW-0413">Isomerase</keyword>
<keyword id="KW-0694">RNA-binding</keyword>
<protein>
    <recommendedName>
        <fullName>Uncharacterized RNA pseudouridine synthase jhp_1352</fullName>
        <ecNumber>5.4.99.-</ecNumber>
    </recommendedName>
    <alternativeName>
        <fullName>RNA pseudouridylate synthase</fullName>
    </alternativeName>
    <alternativeName>
        <fullName>RNA-uridine isomerase</fullName>
    </alternativeName>
</protein>
<organism>
    <name type="scientific">Helicobacter pylori (strain J99 / ATCC 700824)</name>
    <name type="common">Campylobacter pylori J99</name>
    <dbReference type="NCBI Taxonomy" id="85963"/>
    <lineage>
        <taxon>Bacteria</taxon>
        <taxon>Pseudomonadati</taxon>
        <taxon>Campylobacterota</taxon>
        <taxon>Epsilonproteobacteria</taxon>
        <taxon>Campylobacterales</taxon>
        <taxon>Helicobacteraceae</taxon>
        <taxon>Helicobacter</taxon>
    </lineage>
</organism>
<evidence type="ECO:0000250" key="1"/>
<evidence type="ECO:0000255" key="2">
    <source>
        <dbReference type="PROSITE-ProRule" id="PRU00182"/>
    </source>
</evidence>
<evidence type="ECO:0000305" key="3"/>
<reference key="1">
    <citation type="journal article" date="1999" name="Nature">
        <title>Genomic sequence comparison of two unrelated isolates of the human gastric pathogen Helicobacter pylori.</title>
        <authorList>
            <person name="Alm R.A."/>
            <person name="Ling L.-S.L."/>
            <person name="Moir D.T."/>
            <person name="King B.L."/>
            <person name="Brown E.D."/>
            <person name="Doig P.C."/>
            <person name="Smith D.R."/>
            <person name="Noonan B."/>
            <person name="Guild B.C."/>
            <person name="deJonge B.L."/>
            <person name="Carmel G."/>
            <person name="Tummino P.J."/>
            <person name="Caruso A."/>
            <person name="Uria-Nickelsen M."/>
            <person name="Mills D.M."/>
            <person name="Ives C."/>
            <person name="Gibson R."/>
            <person name="Merberg D."/>
            <person name="Mills S.D."/>
            <person name="Jiang Q."/>
            <person name="Taylor D.E."/>
            <person name="Vovis G.F."/>
            <person name="Trust T.J."/>
        </authorList>
    </citation>
    <scope>NUCLEOTIDE SEQUENCE [LARGE SCALE GENOMIC DNA]</scope>
    <source>
        <strain>J99 / ATCC 700824</strain>
    </source>
</reference>
<sequence>MEGFSLRINQFLAHYTKHSRREAEKLVLEGRVKINHEHAKLASVVKENDKVFLDKRLIKPLKNKKFSVLVYHKPKGELVSKADPLKRHVIYESLEKKYAHFAPVGRLDFASEGVLLLSDSKAVVSALMHANLEKEYLVKIQGFVTREMENAMQEGLKLENATKGAHQKTPIKSMEFAPFIGYEIIKNHAKYSKLRVIINEGKNRELRRFFAFFNAGVLDLRRVRYGFVNLNALPVGKARFLNRQEYNELHAFMANRANVKGD</sequence>
<dbReference type="EC" id="5.4.99.-"/>
<dbReference type="EMBL" id="AE001439">
    <property type="protein sequence ID" value="AAD06937.1"/>
    <property type="molecule type" value="Genomic_DNA"/>
</dbReference>
<dbReference type="PIR" id="B71817">
    <property type="entry name" value="B71817"/>
</dbReference>
<dbReference type="RefSeq" id="WP_000398342.1">
    <property type="nucleotide sequence ID" value="NC_000921.1"/>
</dbReference>
<dbReference type="SMR" id="Q9ZJG0"/>
<dbReference type="KEGG" id="hpj:jhp_1352"/>
<dbReference type="eggNOG" id="COG1187">
    <property type="taxonomic scope" value="Bacteria"/>
</dbReference>
<dbReference type="Proteomes" id="UP000000804">
    <property type="component" value="Chromosome"/>
</dbReference>
<dbReference type="GO" id="GO:0003723">
    <property type="term" value="F:RNA binding"/>
    <property type="evidence" value="ECO:0007669"/>
    <property type="project" value="UniProtKB-KW"/>
</dbReference>
<dbReference type="GO" id="GO:0120159">
    <property type="term" value="F:rRNA pseudouridine synthase activity"/>
    <property type="evidence" value="ECO:0007669"/>
    <property type="project" value="UniProtKB-ARBA"/>
</dbReference>
<dbReference type="GO" id="GO:0000455">
    <property type="term" value="P:enzyme-directed rRNA pseudouridine synthesis"/>
    <property type="evidence" value="ECO:0007669"/>
    <property type="project" value="UniProtKB-ARBA"/>
</dbReference>
<dbReference type="CDD" id="cd00165">
    <property type="entry name" value="S4"/>
    <property type="match status" value="1"/>
</dbReference>
<dbReference type="Gene3D" id="3.30.70.1560">
    <property type="entry name" value="Alpha-L RNA-binding motif"/>
    <property type="match status" value="1"/>
</dbReference>
<dbReference type="Gene3D" id="3.30.70.580">
    <property type="entry name" value="Pseudouridine synthase I, catalytic domain, N-terminal subdomain"/>
    <property type="match status" value="1"/>
</dbReference>
<dbReference type="Gene3D" id="3.10.290.10">
    <property type="entry name" value="RNA-binding S4 domain"/>
    <property type="match status" value="1"/>
</dbReference>
<dbReference type="InterPro" id="IPR042092">
    <property type="entry name" value="PsdUridine_s_RsuA/RluB/E/F_cat"/>
</dbReference>
<dbReference type="InterPro" id="IPR020103">
    <property type="entry name" value="PsdUridine_synth_cat_dom_sf"/>
</dbReference>
<dbReference type="InterPro" id="IPR006145">
    <property type="entry name" value="PsdUridine_synth_RsuA/RluA"/>
</dbReference>
<dbReference type="InterPro" id="IPR000748">
    <property type="entry name" value="PsdUridine_synth_RsuA/RluB/E/F"/>
</dbReference>
<dbReference type="InterPro" id="IPR018496">
    <property type="entry name" value="PsdUridine_synth_RsuA/RluB_CS"/>
</dbReference>
<dbReference type="InterPro" id="IPR050343">
    <property type="entry name" value="RsuA_PseudoU_synthase"/>
</dbReference>
<dbReference type="InterPro" id="IPR002942">
    <property type="entry name" value="S4_RNA-bd"/>
</dbReference>
<dbReference type="InterPro" id="IPR036986">
    <property type="entry name" value="S4_RNA-bd_sf"/>
</dbReference>
<dbReference type="InterPro" id="IPR020094">
    <property type="entry name" value="TruA/RsuA/RluB/E/F_N"/>
</dbReference>
<dbReference type="NCBIfam" id="TIGR00093">
    <property type="entry name" value="pseudouridine synthase"/>
    <property type="match status" value="1"/>
</dbReference>
<dbReference type="PANTHER" id="PTHR47683">
    <property type="entry name" value="PSEUDOURIDINE SYNTHASE FAMILY PROTEIN-RELATED"/>
    <property type="match status" value="1"/>
</dbReference>
<dbReference type="PANTHER" id="PTHR47683:SF2">
    <property type="entry name" value="RNA-BINDING S4 DOMAIN-CONTAINING PROTEIN"/>
    <property type="match status" value="1"/>
</dbReference>
<dbReference type="Pfam" id="PF00849">
    <property type="entry name" value="PseudoU_synth_2"/>
    <property type="match status" value="1"/>
</dbReference>
<dbReference type="Pfam" id="PF01479">
    <property type="entry name" value="S4"/>
    <property type="match status" value="1"/>
</dbReference>
<dbReference type="SMART" id="SM00363">
    <property type="entry name" value="S4"/>
    <property type="match status" value="1"/>
</dbReference>
<dbReference type="SUPFAM" id="SSF55174">
    <property type="entry name" value="Alpha-L RNA-binding motif"/>
    <property type="match status" value="1"/>
</dbReference>
<dbReference type="SUPFAM" id="SSF55120">
    <property type="entry name" value="Pseudouridine synthase"/>
    <property type="match status" value="1"/>
</dbReference>
<dbReference type="PROSITE" id="PS01149">
    <property type="entry name" value="PSI_RSU"/>
    <property type="match status" value="1"/>
</dbReference>
<dbReference type="PROSITE" id="PS50889">
    <property type="entry name" value="S4"/>
    <property type="match status" value="1"/>
</dbReference>
<comment type="catalytic activity">
    <reaction>
        <text>a uridine in RNA = a pseudouridine in RNA</text>
        <dbReference type="Rhea" id="RHEA:48348"/>
        <dbReference type="Rhea" id="RHEA-COMP:12068"/>
        <dbReference type="Rhea" id="RHEA-COMP:12069"/>
        <dbReference type="ChEBI" id="CHEBI:65314"/>
        <dbReference type="ChEBI" id="CHEBI:65315"/>
    </reaction>
</comment>
<comment type="similarity">
    <text evidence="3">Belongs to the pseudouridine synthase RsuA family.</text>
</comment>
<name>YE59_HELPJ</name>
<feature type="chain" id="PRO_0000100027" description="Uncharacterized RNA pseudouridine synthase jhp_1352">
    <location>
        <begin position="1"/>
        <end position="262"/>
    </location>
</feature>
<feature type="domain" description="S4 RNA-binding" evidence="2">
    <location>
        <begin position="6"/>
        <end position="70"/>
    </location>
</feature>
<feature type="active site" description="Nucleophile" evidence="1">
    <location>
        <position position="108"/>
    </location>
</feature>
<accession>Q9ZJG0</accession>
<proteinExistence type="inferred from homology"/>
<gene>
    <name type="ordered locus">jhp_1352</name>
</gene>